<accession>Q196Z6</accession>
<feature type="chain" id="PRO_0000377957" description="Uncharacterized protein 064L">
    <location>
        <begin position="1"/>
        <end position="280"/>
    </location>
</feature>
<organismHost>
    <name type="scientific">Aedes vexans</name>
    <name type="common">Inland floodwater mosquito</name>
    <name type="synonym">Culex vexans</name>
    <dbReference type="NCBI Taxonomy" id="7163"/>
</organismHost>
<organismHost>
    <name type="scientific">Culex territans</name>
    <dbReference type="NCBI Taxonomy" id="42431"/>
</organismHost>
<organismHost>
    <name type="scientific">Culiseta annulata</name>
    <dbReference type="NCBI Taxonomy" id="332058"/>
</organismHost>
<organismHost>
    <name type="scientific">Ochlerotatus sollicitans</name>
    <name type="common">eastern saltmarsh mosquito</name>
    <dbReference type="NCBI Taxonomy" id="310513"/>
</organismHost>
<organismHost>
    <name type="scientific">Ochlerotatus taeniorhynchus</name>
    <name type="common">Black salt marsh mosquito</name>
    <name type="synonym">Aedes taeniorhynchus</name>
    <dbReference type="NCBI Taxonomy" id="329105"/>
</organismHost>
<organismHost>
    <name type="scientific">Psorophora ferox</name>
    <dbReference type="NCBI Taxonomy" id="7183"/>
</organismHost>
<name>064L_IIV3</name>
<reference key="1">
    <citation type="journal article" date="2006" name="J. Virol.">
        <title>Genome of invertebrate iridescent virus type 3 (mosquito iridescent virus).</title>
        <authorList>
            <person name="Delhon G."/>
            <person name="Tulman E.R."/>
            <person name="Afonso C.L."/>
            <person name="Lu Z."/>
            <person name="Becnel J.J."/>
            <person name="Moser B.A."/>
            <person name="Kutish G.F."/>
            <person name="Rock D.L."/>
        </authorList>
    </citation>
    <scope>NUCLEOTIDE SEQUENCE [LARGE SCALE GENOMIC DNA]</scope>
</reference>
<sequence>MDAVKHPVSSLAPHRLGKGFYFMVNSKQIIKKFYNKSFLECSATQETSTTPHDRDNMDQAKLCSLVFEIFKKQTRLLAHLVLEEAIDLNNDLLFAVIYFNDEAILNSLVRHLYKYKPYYCDFTVRAQELDLVVHLDLGHCIDRLKSFIDPDTACFVLCSNLSQLTGLNCLKRVLKHKIIQKSYHLYLLLKTSHKVQQQWPDPVHVVEKYVTKRMVSYALTDNNPLLLAIVLDRLLVKLPTDDFAPLIVGIIESNRFKVECLPTLLQYHNRVKTTTKPIRI</sequence>
<keyword id="KW-1185">Reference proteome</keyword>
<gene>
    <name type="ORF">IIV3-064L</name>
</gene>
<protein>
    <recommendedName>
        <fullName>Uncharacterized protein 064L</fullName>
    </recommendedName>
</protein>
<proteinExistence type="predicted"/>
<dbReference type="EMBL" id="DQ643392">
    <property type="protein sequence ID" value="ABF82094.1"/>
    <property type="molecule type" value="Genomic_DNA"/>
</dbReference>
<dbReference type="RefSeq" id="YP_654636.1">
    <property type="nucleotide sequence ID" value="NC_008187.1"/>
</dbReference>
<dbReference type="KEGG" id="vg:4156314"/>
<dbReference type="Proteomes" id="UP000001358">
    <property type="component" value="Genome"/>
</dbReference>
<organism>
    <name type="scientific">Invertebrate iridescent virus 3</name>
    <name type="common">IIV-3</name>
    <name type="synonym">Mosquito iridescent virus</name>
    <dbReference type="NCBI Taxonomy" id="345201"/>
    <lineage>
        <taxon>Viruses</taxon>
        <taxon>Varidnaviria</taxon>
        <taxon>Bamfordvirae</taxon>
        <taxon>Nucleocytoviricota</taxon>
        <taxon>Megaviricetes</taxon>
        <taxon>Pimascovirales</taxon>
        <taxon>Iridoviridae</taxon>
        <taxon>Betairidovirinae</taxon>
        <taxon>Chloriridovirus</taxon>
    </lineage>
</organism>